<accession>A7FM05</accession>
<dbReference type="EMBL" id="CP000720">
    <property type="protein sequence ID" value="ABS45919.1"/>
    <property type="molecule type" value="Genomic_DNA"/>
</dbReference>
<dbReference type="RefSeq" id="WP_011191763.1">
    <property type="nucleotide sequence ID" value="NC_009708.1"/>
</dbReference>
<dbReference type="SMR" id="A7FM05"/>
<dbReference type="GeneID" id="49787249"/>
<dbReference type="KEGG" id="ypi:YpsIP31758_3326"/>
<dbReference type="HOGENOM" id="CLU_038034_2_5_6"/>
<dbReference type="Proteomes" id="UP000002412">
    <property type="component" value="Chromosome"/>
</dbReference>
<dbReference type="GO" id="GO:0042597">
    <property type="term" value="C:periplasmic space"/>
    <property type="evidence" value="ECO:0007669"/>
    <property type="project" value="UniProtKB-SubCell"/>
</dbReference>
<dbReference type="GO" id="GO:0031419">
    <property type="term" value="F:cobalamin binding"/>
    <property type="evidence" value="ECO:0007669"/>
    <property type="project" value="InterPro"/>
</dbReference>
<dbReference type="GO" id="GO:0015889">
    <property type="term" value="P:cobalamin transport"/>
    <property type="evidence" value="ECO:0007669"/>
    <property type="project" value="UniProtKB-UniRule"/>
</dbReference>
<dbReference type="CDD" id="cd01144">
    <property type="entry name" value="BtuF"/>
    <property type="match status" value="1"/>
</dbReference>
<dbReference type="Gene3D" id="3.40.50.1980">
    <property type="entry name" value="Nitrogenase molybdenum iron protein domain"/>
    <property type="match status" value="2"/>
</dbReference>
<dbReference type="HAMAP" id="MF_01000">
    <property type="entry name" value="BtuF"/>
    <property type="match status" value="1"/>
</dbReference>
<dbReference type="InterPro" id="IPR002491">
    <property type="entry name" value="ABC_transptr_periplasmic_BD"/>
</dbReference>
<dbReference type="InterPro" id="IPR023544">
    <property type="entry name" value="ABC_transptr_vit_B12-bd"/>
</dbReference>
<dbReference type="InterPro" id="IPR054828">
    <property type="entry name" value="Vit_B12_bind_prot"/>
</dbReference>
<dbReference type="InterPro" id="IPR051030">
    <property type="entry name" value="Vitamin_B12-ABC_binding"/>
</dbReference>
<dbReference type="NCBIfam" id="NF002894">
    <property type="entry name" value="PRK03379.1"/>
    <property type="match status" value="1"/>
</dbReference>
<dbReference type="NCBIfam" id="NF038402">
    <property type="entry name" value="TroA_like"/>
    <property type="match status" value="1"/>
</dbReference>
<dbReference type="PANTHER" id="PTHR42860">
    <property type="entry name" value="VITAMIN B12-BINDING PROTEIN"/>
    <property type="match status" value="1"/>
</dbReference>
<dbReference type="PANTHER" id="PTHR42860:SF1">
    <property type="entry name" value="VITAMIN B12-BINDING PROTEIN"/>
    <property type="match status" value="1"/>
</dbReference>
<dbReference type="Pfam" id="PF01497">
    <property type="entry name" value="Peripla_BP_2"/>
    <property type="match status" value="1"/>
</dbReference>
<dbReference type="SUPFAM" id="SSF53807">
    <property type="entry name" value="Helical backbone' metal receptor"/>
    <property type="match status" value="1"/>
</dbReference>
<dbReference type="PROSITE" id="PS50983">
    <property type="entry name" value="FE_B12_PBP"/>
    <property type="match status" value="1"/>
</dbReference>
<organism>
    <name type="scientific">Yersinia pseudotuberculosis serotype O:1b (strain IP 31758)</name>
    <dbReference type="NCBI Taxonomy" id="349747"/>
    <lineage>
        <taxon>Bacteria</taxon>
        <taxon>Pseudomonadati</taxon>
        <taxon>Pseudomonadota</taxon>
        <taxon>Gammaproteobacteria</taxon>
        <taxon>Enterobacterales</taxon>
        <taxon>Yersiniaceae</taxon>
        <taxon>Yersinia</taxon>
    </lineage>
</organism>
<name>BTUF_YERP3</name>
<protein>
    <recommendedName>
        <fullName evidence="1">Vitamin B12-binding protein</fullName>
    </recommendedName>
</protein>
<keyword id="KW-1015">Disulfide bond</keyword>
<keyword id="KW-0574">Periplasm</keyword>
<keyword id="KW-0732">Signal</keyword>
<keyword id="KW-0813">Transport</keyword>
<evidence type="ECO:0000255" key="1">
    <source>
        <dbReference type="HAMAP-Rule" id="MF_01000"/>
    </source>
</evidence>
<proteinExistence type="inferred from homology"/>
<comment type="function">
    <text evidence="1">Part of the ABC transporter complex BtuCDF involved in vitamin B12 import. Binds vitamin B12 and delivers it to the periplasmic surface of BtuC.</text>
</comment>
<comment type="subunit">
    <text evidence="1">The complex is composed of two ATP-binding proteins (BtuD), two transmembrane proteins (BtuC) and a solute-binding protein (BtuF).</text>
</comment>
<comment type="subcellular location">
    <subcellularLocation>
        <location evidence="1">Periplasm</location>
    </subcellularLocation>
</comment>
<comment type="similarity">
    <text evidence="1">Belongs to the BtuF family.</text>
</comment>
<reference key="1">
    <citation type="journal article" date="2007" name="PLoS Genet.">
        <title>The complete genome sequence of Yersinia pseudotuberculosis IP31758, the causative agent of Far East scarlet-like fever.</title>
        <authorList>
            <person name="Eppinger M."/>
            <person name="Rosovitz M.J."/>
            <person name="Fricke W.F."/>
            <person name="Rasko D.A."/>
            <person name="Kokorina G."/>
            <person name="Fayolle C."/>
            <person name="Lindler L.E."/>
            <person name="Carniel E."/>
            <person name="Ravel J."/>
        </authorList>
    </citation>
    <scope>NUCLEOTIDE SEQUENCE [LARGE SCALE GENOMIC DNA]</scope>
    <source>
        <strain>IP 31758</strain>
    </source>
</reference>
<gene>
    <name evidence="1" type="primary">btuF</name>
    <name type="ordered locus">YpsIP31758_3326</name>
</gene>
<feature type="signal peptide" evidence="1">
    <location>
        <begin position="1"/>
        <end position="27"/>
    </location>
</feature>
<feature type="chain" id="PRO_1000062723" description="Vitamin B12-binding protein">
    <location>
        <begin position="28"/>
        <end position="280"/>
    </location>
</feature>
<feature type="domain" description="Fe/B12 periplasmic-binding" evidence="1">
    <location>
        <begin position="30"/>
        <end position="277"/>
    </location>
</feature>
<feature type="binding site" evidence="1">
    <location>
        <position position="57"/>
    </location>
    <ligand>
        <name>cyanocob(III)alamin</name>
        <dbReference type="ChEBI" id="CHEBI:17439"/>
    </ligand>
</feature>
<feature type="site" description="Important for BtuC binding" evidence="1">
    <location>
        <position position="79"/>
    </location>
</feature>
<feature type="site" description="Important for BtuC binding" evidence="1">
    <location>
        <position position="209"/>
    </location>
</feature>
<feature type="disulfide bond" evidence="1">
    <location>
        <begin position="190"/>
        <end position="266"/>
    </location>
</feature>
<sequence length="280" mass="30841">MMPLGLFPLPRAAVVLLISLLTLPAQAAERVISLSPSTTELAYAAGLGDKLVAVSAYSDYPESAKKLEHVASWQGINVERILALKPDLILAWRGGNPQRPLDQLAALGIPIFYSDPTHIDQIASDLDKLAQYSPHPEQAHQAAEQFRQHVNTLRDRYARSQPKRTFLQFGTQPLFTSSGHTLQSEVVSLCGGENIFADSRVPWPQVSREQVMTRKPQVIVVSGTQSQVDNVSAFWLPQLVVPVIALNEDWFNRASPRILLAAQQLCQQMASIPTPVAESH</sequence>